<gene>
    <name type="primary">Lamp2</name>
    <name type="synonym">Lamp-2</name>
</gene>
<feature type="signal peptide" evidence="6 8 9">
    <location>
        <begin position="1"/>
        <end position="26"/>
    </location>
</feature>
<feature type="chain" id="PRO_0000017112" description="Lysosome-associated membrane glycoprotein 2">
    <location>
        <begin position="27"/>
        <end position="411"/>
    </location>
</feature>
<feature type="topological domain" description="Lumenal" evidence="3">
    <location>
        <begin position="27"/>
        <end position="376"/>
    </location>
</feature>
<feature type="transmembrane region" description="Helical" evidence="4">
    <location>
        <begin position="377"/>
        <end position="400"/>
    </location>
</feature>
<feature type="topological domain" description="Cytoplasmic" evidence="4 12">
    <location>
        <begin position="401"/>
        <end position="411"/>
    </location>
</feature>
<feature type="region of interest" description="First lumenal domain">
    <location>
        <begin position="27"/>
        <end position="188"/>
    </location>
</feature>
<feature type="region of interest" description="Hinge">
    <location>
        <begin position="189"/>
        <end position="229"/>
    </location>
</feature>
<feature type="region of interest" description="Second lumenal domain">
    <location>
        <begin position="230"/>
        <end position="376"/>
    </location>
</feature>
<feature type="region of interest" description="Important for binding and subsequent lysosomal degradation of target proteins" evidence="1">
    <location>
        <begin position="402"/>
        <end position="405"/>
    </location>
</feature>
<feature type="glycosylation site" description="N-linked (GlcNAc...) asparagine" evidence="3">
    <location>
        <position position="46"/>
    </location>
</feature>
<feature type="glycosylation site" description="N-linked (GlcNAc...) asparagine" evidence="3">
    <location>
        <position position="57"/>
    </location>
</feature>
<feature type="glycosylation site" description="N-linked (GlcNAc...) asparagine" evidence="3">
    <location>
        <position position="71"/>
    </location>
</feature>
<feature type="glycosylation site" description="N-linked (GlcNAc...) asparagine" evidence="3">
    <location>
        <position position="97"/>
    </location>
</feature>
<feature type="glycosylation site" description="N-linked (GlcNAc...) asparagine" evidence="3">
    <location>
        <position position="109"/>
    </location>
</feature>
<feature type="glycosylation site" description="N-linked (GlcNAc...) asparagine" evidence="3">
    <location>
        <position position="117"/>
    </location>
</feature>
<feature type="glycosylation site" description="N-linked (GlcNAc...) asparagine" evidence="3">
    <location>
        <position position="175"/>
    </location>
</feature>
<feature type="glycosylation site" description="N-linked (GlcNAc...) asparagine" evidence="3">
    <location>
        <position position="223"/>
    </location>
</feature>
<feature type="glycosylation site" description="N-linked (GlcNAc...) asparagine" evidence="3">
    <location>
        <position position="230"/>
    </location>
</feature>
<feature type="glycosylation site" description="N-linked (GlcNAc...) asparagine" evidence="3">
    <location>
        <position position="243"/>
    </location>
</feature>
<feature type="glycosylation site" description="N-linked (GlcNAc...) asparagine" evidence="3">
    <location>
        <position position="261"/>
    </location>
</feature>
<feature type="glycosylation site" description="N-linked (GlcNAc...) asparagine" evidence="3">
    <location>
        <position position="276"/>
    </location>
</feature>
<feature type="glycosylation site" description="N-linked (GlcNAc...) asparagine" evidence="3">
    <location>
        <position position="308"/>
    </location>
</feature>
<feature type="glycosylation site" description="N-linked (GlcNAc...) asparagine" evidence="3">
    <location>
        <position position="318"/>
    </location>
</feature>
<feature type="glycosylation site" description="N-linked (GlcNAc...) asparagine" evidence="3">
    <location>
        <position position="357"/>
    </location>
</feature>
<feature type="disulfide bond" evidence="4">
    <location>
        <begin position="38"/>
        <end position="75"/>
    </location>
</feature>
<feature type="disulfide bond" evidence="4">
    <location>
        <begin position="149"/>
        <end position="185"/>
    </location>
</feature>
<feature type="disulfide bond" evidence="4">
    <location>
        <begin position="233"/>
        <end position="266"/>
    </location>
</feature>
<feature type="disulfide bond" evidence="4">
    <location>
        <begin position="332"/>
        <end position="369"/>
    </location>
</feature>
<feature type="sequence conflict" description="In Ref. 1; BAA14236." ref="1">
    <original>LSPVT</original>
    <variation>PLSGY</variation>
    <location>
        <begin position="4"/>
        <end position="8"/>
    </location>
</feature>
<feature type="sequence conflict" description="In Ref. 1; BAA14236, 4; AAA41526 and 3; AAH61990." ref="1 4 3">
    <original>I</original>
    <variation>T</variation>
    <location>
        <position position="259"/>
    </location>
</feature>
<dbReference type="EMBL" id="D90211">
    <property type="protein sequence ID" value="BAA14236.1"/>
    <property type="molecule type" value="mRNA"/>
</dbReference>
<dbReference type="EMBL" id="AABR07041263">
    <property type="status" value="NOT_ANNOTATED_CDS"/>
    <property type="molecule type" value="Genomic_DNA"/>
</dbReference>
<dbReference type="EMBL" id="BC061990">
    <property type="protein sequence ID" value="AAH61990.1"/>
    <property type="molecule type" value="mRNA"/>
</dbReference>
<dbReference type="EMBL" id="M32016">
    <property type="protein sequence ID" value="AAA41526.1"/>
    <property type="molecule type" value="mRNA"/>
</dbReference>
<dbReference type="PIR" id="A33664">
    <property type="entry name" value="A33664"/>
</dbReference>
<dbReference type="RefSeq" id="NP_058764.2">
    <property type="nucleotide sequence ID" value="NM_017068.2"/>
</dbReference>
<dbReference type="SMR" id="P17046"/>
<dbReference type="FunCoup" id="P17046">
    <property type="interactions" value="2126"/>
</dbReference>
<dbReference type="IntAct" id="P17046">
    <property type="interactions" value="4"/>
</dbReference>
<dbReference type="MINT" id="P17046"/>
<dbReference type="STRING" id="10116.ENSRNOP00000000177"/>
<dbReference type="GlyCosmos" id="P17046">
    <property type="glycosylation" value="16 sites, 7 glycans"/>
</dbReference>
<dbReference type="GlyGen" id="P17046">
    <property type="glycosylation" value="17 sites, 7 N-linked glycans (3 sites)"/>
</dbReference>
<dbReference type="iPTMnet" id="P17046"/>
<dbReference type="PhosphoSitePlus" id="P17046"/>
<dbReference type="jPOST" id="P17046"/>
<dbReference type="PaxDb" id="10116-ENSRNOP00000000177"/>
<dbReference type="Ensembl" id="ENSRNOT00000000177.5">
    <property type="protein sequence ID" value="ENSRNOP00000000177.3"/>
    <property type="gene ID" value="ENSRNOG00000000164.5"/>
</dbReference>
<dbReference type="GeneID" id="24944"/>
<dbReference type="KEGG" id="rno:24944"/>
<dbReference type="UCSC" id="RGD:2990">
    <property type="organism name" value="rat"/>
</dbReference>
<dbReference type="AGR" id="RGD:2990"/>
<dbReference type="CTD" id="3920"/>
<dbReference type="RGD" id="2990">
    <property type="gene designation" value="Lamp2"/>
</dbReference>
<dbReference type="eggNOG" id="KOG4818">
    <property type="taxonomic scope" value="Eukaryota"/>
</dbReference>
<dbReference type="GeneTree" id="ENSGT00950000182899"/>
<dbReference type="InParanoid" id="P17046"/>
<dbReference type="PhylomeDB" id="P17046"/>
<dbReference type="TreeFam" id="TF316339"/>
<dbReference type="Reactome" id="R-RNO-114608">
    <property type="pathway name" value="Platelet degranulation"/>
</dbReference>
<dbReference type="Reactome" id="R-RNO-6798695">
    <property type="pathway name" value="Neutrophil degranulation"/>
</dbReference>
<dbReference type="PRO" id="PR:P17046"/>
<dbReference type="Proteomes" id="UP000002494">
    <property type="component" value="Chromosome X"/>
</dbReference>
<dbReference type="Bgee" id="ENSRNOG00000000164">
    <property type="expression patterns" value="Expressed in liver and 20 other cell types or tissues"/>
</dbReference>
<dbReference type="GO" id="GO:0044754">
    <property type="term" value="C:autolysosome"/>
    <property type="evidence" value="ECO:0000266"/>
    <property type="project" value="RGD"/>
</dbReference>
<dbReference type="GO" id="GO:0000421">
    <property type="term" value="C:autophagosome membrane"/>
    <property type="evidence" value="ECO:0000266"/>
    <property type="project" value="RGD"/>
</dbReference>
<dbReference type="GO" id="GO:0061742">
    <property type="term" value="C:chaperone-mediated autophagy translocation complex"/>
    <property type="evidence" value="ECO:0000250"/>
    <property type="project" value="ParkinsonsUK-UCL"/>
</dbReference>
<dbReference type="GO" id="GO:0005768">
    <property type="term" value="C:endosome"/>
    <property type="evidence" value="ECO:0000314"/>
    <property type="project" value="RGD"/>
</dbReference>
<dbReference type="GO" id="GO:0070062">
    <property type="term" value="C:extracellular exosome"/>
    <property type="evidence" value="ECO:0000266"/>
    <property type="project" value="RGD"/>
</dbReference>
<dbReference type="GO" id="GO:0005615">
    <property type="term" value="C:extracellular space"/>
    <property type="evidence" value="ECO:0000266"/>
    <property type="project" value="RGD"/>
</dbReference>
<dbReference type="GO" id="GO:0005770">
    <property type="term" value="C:late endosome"/>
    <property type="evidence" value="ECO:0000266"/>
    <property type="project" value="RGD"/>
</dbReference>
<dbReference type="GO" id="GO:0031902">
    <property type="term" value="C:late endosome membrane"/>
    <property type="evidence" value="ECO:0000266"/>
    <property type="project" value="RGD"/>
</dbReference>
<dbReference type="GO" id="GO:1990836">
    <property type="term" value="C:lysosomal matrix"/>
    <property type="evidence" value="ECO:0000314"/>
    <property type="project" value="MGI"/>
</dbReference>
<dbReference type="GO" id="GO:0005765">
    <property type="term" value="C:lysosomal membrane"/>
    <property type="evidence" value="ECO:0000314"/>
    <property type="project" value="ParkinsonsUK-UCL"/>
</dbReference>
<dbReference type="GO" id="GO:0005764">
    <property type="term" value="C:lysosome"/>
    <property type="evidence" value="ECO:0000266"/>
    <property type="project" value="RGD"/>
</dbReference>
<dbReference type="GO" id="GO:0016020">
    <property type="term" value="C:membrane"/>
    <property type="evidence" value="ECO:0000266"/>
    <property type="project" value="RGD"/>
</dbReference>
<dbReference type="GO" id="GO:0030670">
    <property type="term" value="C:phagocytic vesicle membrane"/>
    <property type="evidence" value="ECO:0000266"/>
    <property type="project" value="RGD"/>
</dbReference>
<dbReference type="GO" id="GO:0005886">
    <property type="term" value="C:plasma membrane"/>
    <property type="evidence" value="ECO:0000318"/>
    <property type="project" value="GO_Central"/>
</dbReference>
<dbReference type="GO" id="GO:0031088">
    <property type="term" value="C:platelet dense granule membrane"/>
    <property type="evidence" value="ECO:0000266"/>
    <property type="project" value="RGD"/>
</dbReference>
<dbReference type="GO" id="GO:0019899">
    <property type="term" value="F:enzyme binding"/>
    <property type="evidence" value="ECO:0000266"/>
    <property type="project" value="RGD"/>
</dbReference>
<dbReference type="GO" id="GO:0008200">
    <property type="term" value="F:ion channel inhibitor activity"/>
    <property type="evidence" value="ECO:0000250"/>
    <property type="project" value="UniProtKB"/>
</dbReference>
<dbReference type="GO" id="GO:0019904">
    <property type="term" value="F:protein domain specific binding"/>
    <property type="evidence" value="ECO:0000266"/>
    <property type="project" value="RGD"/>
</dbReference>
<dbReference type="GO" id="GO:0097352">
    <property type="term" value="P:autophagosome maturation"/>
    <property type="evidence" value="ECO:0000250"/>
    <property type="project" value="UniProtKB"/>
</dbReference>
<dbReference type="GO" id="GO:0006914">
    <property type="term" value="P:autophagy"/>
    <property type="evidence" value="ECO:0000266"/>
    <property type="project" value="RGD"/>
</dbReference>
<dbReference type="GO" id="GO:0009267">
    <property type="term" value="P:cellular response to starvation"/>
    <property type="evidence" value="ECO:0000250"/>
    <property type="project" value="UniProtKB"/>
</dbReference>
<dbReference type="GO" id="GO:0061684">
    <property type="term" value="P:chaperone-mediated autophagy"/>
    <property type="evidence" value="ECO:0000314"/>
    <property type="project" value="ParkinsonsUK-UCL"/>
</dbReference>
<dbReference type="GO" id="GO:0007042">
    <property type="term" value="P:lysosomal lumen acidification"/>
    <property type="evidence" value="ECO:0000250"/>
    <property type="project" value="UniProtKB"/>
</dbReference>
<dbReference type="GO" id="GO:1905146">
    <property type="term" value="P:lysosomal protein catabolic process"/>
    <property type="evidence" value="ECO:0000250"/>
    <property type="project" value="UniProtKB"/>
</dbReference>
<dbReference type="GO" id="GO:0046716">
    <property type="term" value="P:muscle cell cellular homeostasis"/>
    <property type="evidence" value="ECO:0000266"/>
    <property type="project" value="RGD"/>
</dbReference>
<dbReference type="GO" id="GO:0050821">
    <property type="term" value="P:protein stabilization"/>
    <property type="evidence" value="ECO:0000250"/>
    <property type="project" value="CAFA"/>
</dbReference>
<dbReference type="GO" id="GO:0006605">
    <property type="term" value="P:protein targeting"/>
    <property type="evidence" value="ECO:0000250"/>
    <property type="project" value="UniProtKB"/>
</dbReference>
<dbReference type="GO" id="GO:0061740">
    <property type="term" value="P:protein targeting to lysosome involved in chaperone-mediated autophagy"/>
    <property type="evidence" value="ECO:0000315"/>
    <property type="project" value="MGI"/>
</dbReference>
<dbReference type="GO" id="GO:0031647">
    <property type="term" value="P:regulation of protein stability"/>
    <property type="evidence" value="ECO:0000266"/>
    <property type="project" value="RGD"/>
</dbReference>
<dbReference type="FunFam" id="2.40.160.110:FF:000004">
    <property type="entry name" value="Lysosomal associated membrane protein 2"/>
    <property type="match status" value="1"/>
</dbReference>
<dbReference type="FunFam" id="2.40.160.110:FF:000001">
    <property type="entry name" value="lysosome-associated membrane glycoprotein 2 isoform X2"/>
    <property type="match status" value="1"/>
</dbReference>
<dbReference type="Gene3D" id="2.40.160.110">
    <property type="match status" value="2"/>
</dbReference>
<dbReference type="InterPro" id="IPR048528">
    <property type="entry name" value="Lamp2-like_luminal"/>
</dbReference>
<dbReference type="InterPro" id="IPR048524">
    <property type="entry name" value="Lamp2-like_TM"/>
</dbReference>
<dbReference type="InterPro" id="IPR018134">
    <property type="entry name" value="LAMP_CS"/>
</dbReference>
<dbReference type="InterPro" id="IPR002000">
    <property type="entry name" value="Lysosome-assoc_membr_glycop"/>
</dbReference>
<dbReference type="PANTHER" id="PTHR11506">
    <property type="entry name" value="LYSOSOME-ASSOCIATED MEMBRANE GLYCOPROTEIN"/>
    <property type="match status" value="1"/>
</dbReference>
<dbReference type="PANTHER" id="PTHR11506:SF35">
    <property type="entry name" value="LYSOSOME-ASSOCIATED MEMBRANE GLYCOPROTEIN 5"/>
    <property type="match status" value="1"/>
</dbReference>
<dbReference type="Pfam" id="PF01299">
    <property type="entry name" value="Lamp2-like_luminal"/>
    <property type="match status" value="2"/>
</dbReference>
<dbReference type="Pfam" id="PF21222">
    <property type="entry name" value="Lamp2_2nd"/>
    <property type="match status" value="1"/>
</dbReference>
<dbReference type="PRINTS" id="PR00336">
    <property type="entry name" value="LYSASSOCTDMP"/>
</dbReference>
<dbReference type="PROSITE" id="PS00310">
    <property type="entry name" value="LAMP_1"/>
    <property type="match status" value="1"/>
</dbReference>
<dbReference type="PROSITE" id="PS00311">
    <property type="entry name" value="LAMP_2"/>
    <property type="match status" value="1"/>
</dbReference>
<dbReference type="PROSITE" id="PS51407">
    <property type="entry name" value="LAMP_3"/>
    <property type="match status" value="1"/>
</dbReference>
<sequence>MRLLSPVTGSKLVLLFLFLGAVRSDALKLNLTDSKGTCLYAEWEMNFTITYEALKVNETVTITVPDKVTYNGSSCGDDKNGAKIMIQYGSTLSWAVNFTKEASQYFINNITLSYNTNDTKTFPGAVPKGILTVIIPVGSQLPLGVIFKCSSVLTFNLSPVVQHYWGIHLQAFVQNGTVSKHEQVCKEDKTATTVAPIIHTTVPSPTTTLTPTSIPVPTPTVGNYTISNGNATCLLATMGLQLNITEEKVPFIFNINPAITNFTGSCQPQTAQLRLNNSQIKYLDFIFAVKNEKRFYLKEVNVNMYLANGSAFHVSNNNLSFWDAPLGSSYMCNKEQVVSVSRTFQINTFNLKVQPFNVTKGEYSTAQDCSADEDNFLVPIAVGAALGGVLILVLLAYFIGLKRHHTGYEQF</sequence>
<evidence type="ECO:0000250" key="1">
    <source>
        <dbReference type="UniProtKB" id="P13473"/>
    </source>
</evidence>
<evidence type="ECO:0000250" key="2">
    <source>
        <dbReference type="UniProtKB" id="P17047"/>
    </source>
</evidence>
<evidence type="ECO:0000255" key="3"/>
<evidence type="ECO:0000255" key="4">
    <source>
        <dbReference type="PROSITE-ProRule" id="PRU00740"/>
    </source>
</evidence>
<evidence type="ECO:0000269" key="5">
    <source>
    </source>
</evidence>
<evidence type="ECO:0000269" key="6">
    <source>
    </source>
</evidence>
<evidence type="ECO:0000269" key="7">
    <source>
    </source>
</evidence>
<evidence type="ECO:0000269" key="8">
    <source>
    </source>
</evidence>
<evidence type="ECO:0000269" key="9">
    <source>
    </source>
</evidence>
<evidence type="ECO:0000303" key="10">
    <source>
    </source>
</evidence>
<evidence type="ECO:0000303" key="11">
    <source>
    </source>
</evidence>
<evidence type="ECO:0000305" key="12">
    <source>
    </source>
</evidence>
<evidence type="ECO:0000312" key="13">
    <source>
        <dbReference type="EMBL" id="AAH61990.1"/>
    </source>
</evidence>
<accession>P17046</accession>
<accession>F1LLX8</accession>
<accession>Q6P6W1</accession>
<reference key="1">
    <citation type="journal article" date="1989" name="Biochem. Biophys. Res. Commun.">
        <title>Isolation and sequencing of a cDNA clone encoding 96 kDa sialoglycoprotein in rat liver lysosomal membranes.</title>
        <authorList>
            <person name="Noguchi Y."/>
            <person name="Himeno M."/>
            <person name="Sasaki H."/>
            <person name="Tanaka Y."/>
            <person name="Kono A."/>
            <person name="Sakaki Y."/>
            <person name="Kato K."/>
        </authorList>
    </citation>
    <scope>NUCLEOTIDE SEQUENCE [MRNA]</scope>
    <scope>PROTEIN SEQUENCE OF 27-45</scope>
    <scope>SUBCELLULAR LOCATION</scope>
</reference>
<reference key="2">
    <citation type="journal article" date="2004" name="Nature">
        <title>Genome sequence of the Brown Norway rat yields insights into mammalian evolution.</title>
        <authorList>
            <person name="Gibbs R.A."/>
            <person name="Weinstock G.M."/>
            <person name="Metzker M.L."/>
            <person name="Muzny D.M."/>
            <person name="Sodergren E.J."/>
            <person name="Scherer S."/>
            <person name="Scott G."/>
            <person name="Steffen D."/>
            <person name="Worley K.C."/>
            <person name="Burch P.E."/>
            <person name="Okwuonu G."/>
            <person name="Hines S."/>
            <person name="Lewis L."/>
            <person name="Deramo C."/>
            <person name="Delgado O."/>
            <person name="Dugan-Rocha S."/>
            <person name="Miner G."/>
            <person name="Morgan M."/>
            <person name="Hawes A."/>
            <person name="Gill R."/>
            <person name="Holt R.A."/>
            <person name="Adams M.D."/>
            <person name="Amanatides P.G."/>
            <person name="Baden-Tillson H."/>
            <person name="Barnstead M."/>
            <person name="Chin S."/>
            <person name="Evans C.A."/>
            <person name="Ferriera S."/>
            <person name="Fosler C."/>
            <person name="Glodek A."/>
            <person name="Gu Z."/>
            <person name="Jennings D."/>
            <person name="Kraft C.L."/>
            <person name="Nguyen T."/>
            <person name="Pfannkoch C.M."/>
            <person name="Sitter C."/>
            <person name="Sutton G.G."/>
            <person name="Venter J.C."/>
            <person name="Woodage T."/>
            <person name="Smith D."/>
            <person name="Lee H.-M."/>
            <person name="Gustafson E."/>
            <person name="Cahill P."/>
            <person name="Kana A."/>
            <person name="Doucette-Stamm L."/>
            <person name="Weinstock K."/>
            <person name="Fechtel K."/>
            <person name="Weiss R.B."/>
            <person name="Dunn D.M."/>
            <person name="Green E.D."/>
            <person name="Blakesley R.W."/>
            <person name="Bouffard G.G."/>
            <person name="De Jong P.J."/>
            <person name="Osoegawa K."/>
            <person name="Zhu B."/>
            <person name="Marra M."/>
            <person name="Schein J."/>
            <person name="Bosdet I."/>
            <person name="Fjell C."/>
            <person name="Jones S."/>
            <person name="Krzywinski M."/>
            <person name="Mathewson C."/>
            <person name="Siddiqui A."/>
            <person name="Wye N."/>
            <person name="McPherson J."/>
            <person name="Zhao S."/>
            <person name="Fraser C.M."/>
            <person name="Shetty J."/>
            <person name="Shatsman S."/>
            <person name="Geer K."/>
            <person name="Chen Y."/>
            <person name="Abramzon S."/>
            <person name="Nierman W.C."/>
            <person name="Havlak P.H."/>
            <person name="Chen R."/>
            <person name="Durbin K.J."/>
            <person name="Egan A."/>
            <person name="Ren Y."/>
            <person name="Song X.-Z."/>
            <person name="Li B."/>
            <person name="Liu Y."/>
            <person name="Qin X."/>
            <person name="Cawley S."/>
            <person name="Cooney A.J."/>
            <person name="D'Souza L.M."/>
            <person name="Martin K."/>
            <person name="Wu J.Q."/>
            <person name="Gonzalez-Garay M.L."/>
            <person name="Jackson A.R."/>
            <person name="Kalafus K.J."/>
            <person name="McLeod M.P."/>
            <person name="Milosavljevic A."/>
            <person name="Virk D."/>
            <person name="Volkov A."/>
            <person name="Wheeler D.A."/>
            <person name="Zhang Z."/>
            <person name="Bailey J.A."/>
            <person name="Eichler E.E."/>
            <person name="Tuzun E."/>
            <person name="Birney E."/>
            <person name="Mongin E."/>
            <person name="Ureta-Vidal A."/>
            <person name="Woodwark C."/>
            <person name="Zdobnov E."/>
            <person name="Bork P."/>
            <person name="Suyama M."/>
            <person name="Torrents D."/>
            <person name="Alexandersson M."/>
            <person name="Trask B.J."/>
            <person name="Young J.M."/>
            <person name="Huang H."/>
            <person name="Wang H."/>
            <person name="Xing H."/>
            <person name="Daniels S."/>
            <person name="Gietzen D."/>
            <person name="Schmidt J."/>
            <person name="Stevens K."/>
            <person name="Vitt U."/>
            <person name="Wingrove J."/>
            <person name="Camara F."/>
            <person name="Mar Alba M."/>
            <person name="Abril J.F."/>
            <person name="Guigo R."/>
            <person name="Smit A."/>
            <person name="Dubchak I."/>
            <person name="Rubin E.M."/>
            <person name="Couronne O."/>
            <person name="Poliakov A."/>
            <person name="Huebner N."/>
            <person name="Ganten D."/>
            <person name="Goesele C."/>
            <person name="Hummel O."/>
            <person name="Kreitler T."/>
            <person name="Lee Y.-A."/>
            <person name="Monti J."/>
            <person name="Schulz H."/>
            <person name="Zimdahl H."/>
            <person name="Himmelbauer H."/>
            <person name="Lehrach H."/>
            <person name="Jacob H.J."/>
            <person name="Bromberg S."/>
            <person name="Gullings-Handley J."/>
            <person name="Jensen-Seaman M.I."/>
            <person name="Kwitek A.E."/>
            <person name="Lazar J."/>
            <person name="Pasko D."/>
            <person name="Tonellato P.J."/>
            <person name="Twigger S."/>
            <person name="Ponting C.P."/>
            <person name="Duarte J.M."/>
            <person name="Rice S."/>
            <person name="Goodstadt L."/>
            <person name="Beatson S.A."/>
            <person name="Emes R.D."/>
            <person name="Winter E.E."/>
            <person name="Webber C."/>
            <person name="Brandt P."/>
            <person name="Nyakatura G."/>
            <person name="Adetobi M."/>
            <person name="Chiaromonte F."/>
            <person name="Elnitski L."/>
            <person name="Eswara P."/>
            <person name="Hardison R.C."/>
            <person name="Hou M."/>
            <person name="Kolbe D."/>
            <person name="Makova K."/>
            <person name="Miller W."/>
            <person name="Nekrutenko A."/>
            <person name="Riemer C."/>
            <person name="Schwartz S."/>
            <person name="Taylor J."/>
            <person name="Yang S."/>
            <person name="Zhang Y."/>
            <person name="Lindpaintner K."/>
            <person name="Andrews T.D."/>
            <person name="Caccamo M."/>
            <person name="Clamp M."/>
            <person name="Clarke L."/>
            <person name="Curwen V."/>
            <person name="Durbin R.M."/>
            <person name="Eyras E."/>
            <person name="Searle S.M."/>
            <person name="Cooper G.M."/>
            <person name="Batzoglou S."/>
            <person name="Brudno M."/>
            <person name="Sidow A."/>
            <person name="Stone E.A."/>
            <person name="Payseur B.A."/>
            <person name="Bourque G."/>
            <person name="Lopez-Otin C."/>
            <person name="Puente X.S."/>
            <person name="Chakrabarti K."/>
            <person name="Chatterji S."/>
            <person name="Dewey C."/>
            <person name="Pachter L."/>
            <person name="Bray N."/>
            <person name="Yap V.B."/>
            <person name="Caspi A."/>
            <person name="Tesler G."/>
            <person name="Pevzner P.A."/>
            <person name="Haussler D."/>
            <person name="Roskin K.M."/>
            <person name="Baertsch R."/>
            <person name="Clawson H."/>
            <person name="Furey T.S."/>
            <person name="Hinrichs A.S."/>
            <person name="Karolchik D."/>
            <person name="Kent W.J."/>
            <person name="Rosenbloom K.R."/>
            <person name="Trumbower H."/>
            <person name="Weirauch M."/>
            <person name="Cooper D.N."/>
            <person name="Stenson P.D."/>
            <person name="Ma B."/>
            <person name="Brent M."/>
            <person name="Arumugam M."/>
            <person name="Shteynberg D."/>
            <person name="Copley R.R."/>
            <person name="Taylor M.S."/>
            <person name="Riethman H."/>
            <person name="Mudunuri U."/>
            <person name="Peterson J."/>
            <person name="Guyer M."/>
            <person name="Felsenfeld A."/>
            <person name="Old S."/>
            <person name="Mockrin S."/>
            <person name="Collins F.S."/>
        </authorList>
    </citation>
    <scope>NUCLEOTIDE SEQUENCE [LARGE SCALE GENOMIC DNA]</scope>
    <source>
        <strain>Brown Norway</strain>
    </source>
</reference>
<reference key="3">
    <citation type="journal article" date="2004" name="Genome Res.">
        <title>The status, quality, and expansion of the NIH full-length cDNA project: the Mammalian Gene Collection (MGC).</title>
        <authorList>
            <consortium name="The MGC Project Team"/>
        </authorList>
    </citation>
    <scope>NUCLEOTIDE SEQUENCE [LARGE SCALE MRNA]</scope>
    <source>
        <tissue evidence="13">Prostate</tissue>
    </source>
</reference>
<reference key="4">
    <citation type="journal article" date="1990" name="J. Biol. Chem.">
        <title>Characterization and cloning of lgp110, a lysosomal membrane glycoprotein from mouse and rat cells.</title>
        <authorList>
            <person name="Granger B.L."/>
            <person name="Green S.A."/>
            <person name="Gabel C.A."/>
            <person name="Howe C.L."/>
            <person name="Mellman I."/>
            <person name="Helenius A."/>
        </authorList>
    </citation>
    <scope>NUCLEOTIDE SEQUENCE [MRNA] OF 19-411</scope>
</reference>
<reference key="5">
    <citation type="journal article" date="1991" name="J. Biochem.">
        <title>Purification, some properties, and tissue distribution of a major lysosome-associated membrane glycoprotein (r-lamp-2) of rat liver.</title>
        <authorList>
            <person name="Akasaki K."/>
            <person name="Yamaguchi Y."/>
            <person name="Furuno K."/>
            <person name="Tsuji H."/>
        </authorList>
    </citation>
    <scope>PROTEIN SEQUENCE OF 27-36</scope>
    <scope>SUBCELLULAR LOCATION</scope>
    <scope>TISSUE SPECIFICITY</scope>
    <scope>GLYCOSYLATION</scope>
    <source>
        <tissue>Liver</tissue>
    </source>
</reference>
<reference key="6">
    <citation type="submission" date="2007-09" db="UniProtKB">
        <authorList>
            <person name="Lubec G."/>
            <person name="Kang S.U."/>
            <person name="Lubec S."/>
        </authorList>
    </citation>
    <scope>PROTEIN SEQUENCE OF 121-148; 282-290 AND 404-411</scope>
    <scope>IDENTIFICATION BY MASS SPECTROMETRY</scope>
    <source>
        <strain>Sprague-Dawley</strain>
        <tissue>Brain</tissue>
    </source>
</reference>
<reference key="7">
    <citation type="journal article" date="1996" name="Science">
        <title>A receptor for the selective uptake and degradation of proteins by lysosomes.</title>
        <authorList>
            <person name="Cuervo A.M."/>
            <person name="Dice J.F."/>
        </authorList>
    </citation>
    <scope>PROTEIN SEQUENCE OF 27-36</scope>
    <scope>FUNCTION</scope>
    <scope>SUBCELLULAR LOCATION</scope>
</reference>
<reference key="8">
    <citation type="journal article" date="2000" name="J. Cell Sci.">
        <title>Unique properties of lamp2a compared to other lamp2 isoforms.</title>
        <authorList>
            <person name="Cuervo A.M."/>
            <person name="Dice J.F."/>
        </authorList>
    </citation>
    <scope>FUNCTION</scope>
    <scope>SUBCELLULAR LOCATION</scope>
    <scope>TOPOLOGY</scope>
    <scope>SUBUNIT</scope>
</reference>
<reference key="9">
    <citation type="journal article" date="2008" name="Mol. Cell. Biol.">
        <title>The chaperone-mediated autophagy receptor organizes in dynamic protein complexes at the lysosomal membrane.</title>
        <authorList>
            <person name="Bandyopadhyay U."/>
            <person name="Kaushik S."/>
            <person name="Varticovski L."/>
            <person name="Cuervo A.M."/>
        </authorList>
    </citation>
    <scope>FUNCTION</scope>
    <scope>SUBCELLULAR LOCATION</scope>
    <scope>SUBUNIT</scope>
    <scope>INTERACTION WITH HSPA8 AND HSP90</scope>
    <scope>GLYCOSYLATION</scope>
</reference>
<proteinExistence type="evidence at protein level"/>
<comment type="function">
    <text evidence="1 5 7 9">Lysosomal membrane glycoprotein which plays an important role in lysosome biogenesis, lysosomal pH regulation and autophagy (PubMed:11082038, PubMed:8662539). Acts as an important regulator of lysosomal lumen pH regulation by acting as a direct inhibitor of the proton channel TMEM175, facilitating lysosomal acidification for optimal hydrolase activity (By similarity). Plays an important role in chaperone-mediated autophagy, a process that mediates lysosomal degradation of proteins in response to various stresses and as part of the normal turnover of proteins with a long biological half-live (PubMed:11082038, PubMed:8662539). Functions by binding target proteins, such as GAPDH, NLRP3 and MLLT11, and targeting them for lysosomal degradation (PubMed:11082038, PubMed:18644871, PubMed:8662539). In the chaperone-mediated autophagy, acts downstream of chaperones, such as HSPA8/HSC70, which recognize and bind substrate proteins and mediate their recruitment to lysosomes, where target proteins bind LAMP2 (PubMed:18644871). Plays a role in lysosomal protein degradation in response to starvation (PubMed:11082038). Required for the fusion of autophagosomes with lysosomes during autophagy (By similarity). Cells that lack LAMP2 express normal levels of VAMP8, but fail to accumulate STX17 on autophagosomes, which is the most likely explanation for the lack of fusion between autophagosomes and lysosomes (By similarity). Required for normal degradation of the contents of autophagosomes (By similarity). Required for efficient MHC class II-mediated presentation of exogenous antigens via its function in lysosomal protein degradation; antigenic peptides generated by proteases in the endosomal/lysosomal compartment are captured by nascent MHC II subunits (By similarity). Is not required for efficient MHC class II-mediated presentation of endogenous antigens (By similarity).</text>
</comment>
<comment type="subunit">
    <text evidence="1 2 5 7">Monomer (PubMed:18644871). Forms large homooligomers (PubMed:11082038, PubMed:18644871). Interacts (via its cytoplasmic region) with HSPA8; HSPA8 mediates recruitment of proteins with a KFERQ motif to the surface of the lysosome for chaperone-mediated autophagy (PubMed:18644871). Interacts with HSP90 in the lysosome lumen; this enhances LAMP2 stability (PubMed:18644871). Interacts with MLLT11 (By similarity). Interacts with ABCB9 (By similarity). Interacts with FURIN (By similarity). Interacts with CT55; this interaction may be important for LAMP2 protein stability (By similarity). Interacts with TMEM175; inhibiting the proton channel activity of TMEM175 (By similarity). Forms a ternary complex with RAB7A and RUFY4 (via RUN domain); the interaction with RAB7A is mediated by RUFY4 (via RUN and coiled coil domains) (By similarity).</text>
</comment>
<comment type="subcellular location">
    <subcellularLocation>
        <location evidence="5 6 7 8 9">Lysosome membrane</location>
        <topology evidence="5">Single-pass type I membrane protein</topology>
    </subcellularLocation>
    <subcellularLocation>
        <location evidence="1">Endosome membrane</location>
        <topology evidence="4">Single-pass type I membrane protein</topology>
    </subcellularLocation>
    <subcellularLocation>
        <location evidence="1">Cell membrane</location>
        <topology evidence="4">Single-pass type I membrane protein</topology>
    </subcellularLocation>
    <subcellularLocation>
        <location evidence="2">Cytoplasmic vesicle</location>
        <location evidence="2">Autophagosome membrane</location>
    </subcellularLocation>
    <text evidence="1">This protein shuttles between lysosomes, endosomes, and the plasma membrane.</text>
</comment>
<comment type="tissue specificity">
    <text evidence="6">Detected in liver, kidney, spleen and macrophages (at protein level).</text>
</comment>
<comment type="PTM">
    <text evidence="6 7">Extensively N-glycosylated (PubMed:1794981, PubMed:18644871). Contains a minor proportion of O-linked glycans (PubMed:1794981). Contains sialylated glycans (PubMed:1794981).</text>
</comment>
<comment type="similarity">
    <text evidence="4">Belongs to the LAMP family.</text>
</comment>
<name>LAMP2_RAT</name>
<organism>
    <name type="scientific">Rattus norvegicus</name>
    <name type="common">Rat</name>
    <dbReference type="NCBI Taxonomy" id="10116"/>
    <lineage>
        <taxon>Eukaryota</taxon>
        <taxon>Metazoa</taxon>
        <taxon>Chordata</taxon>
        <taxon>Craniata</taxon>
        <taxon>Vertebrata</taxon>
        <taxon>Euteleostomi</taxon>
        <taxon>Mammalia</taxon>
        <taxon>Eutheria</taxon>
        <taxon>Euarchontoglires</taxon>
        <taxon>Glires</taxon>
        <taxon>Rodentia</taxon>
        <taxon>Myomorpha</taxon>
        <taxon>Muroidea</taxon>
        <taxon>Muridae</taxon>
        <taxon>Murinae</taxon>
        <taxon>Rattus</taxon>
    </lineage>
</organism>
<protein>
    <recommendedName>
        <fullName>Lysosome-associated membrane glycoprotein 2</fullName>
        <shortName>LAMP-2</shortName>
        <shortName>Lysosome-associated membrane protein 2</shortName>
    </recommendedName>
    <alternativeName>
        <fullName>CD107 antigen-like family member B</fullName>
    </alternativeName>
    <alternativeName>
        <fullName evidence="10">LGP-110</fullName>
    </alternativeName>
    <alternativeName>
        <fullName evidence="11">LGP-96</fullName>
    </alternativeName>
    <alternativeName>
        <fullName>Lysosomal membrane glycoprotein type B</fullName>
        <shortName>LGP-B</shortName>
    </alternativeName>
    <cdAntigenName>CD107b</cdAntigenName>
</protein>
<keyword id="KW-0072">Autophagy</keyword>
<keyword id="KW-1003">Cell membrane</keyword>
<keyword id="KW-0968">Cytoplasmic vesicle</keyword>
<keyword id="KW-0903">Direct protein sequencing</keyword>
<keyword id="KW-1015">Disulfide bond</keyword>
<keyword id="KW-0967">Endosome</keyword>
<keyword id="KW-0325">Glycoprotein</keyword>
<keyword id="KW-0458">Lysosome</keyword>
<keyword id="KW-0472">Membrane</keyword>
<keyword id="KW-1185">Reference proteome</keyword>
<keyword id="KW-0732">Signal</keyword>
<keyword id="KW-0812">Transmembrane</keyword>
<keyword id="KW-1133">Transmembrane helix</keyword>